<proteinExistence type="inferred from homology"/>
<sequence length="300" mass="32908">MGAQLRIYRRRIRSVRATAKITRAMELIAASRIVKAQQRVVASTPYAEAITRAVSAVASQSNVDHPLLTERARPVRAAVLLVTSDRGLAGAYSANVLREGEALTEHLRERGLDVVHYIIGRKGLAYYRFRDRPVVRSWLGFSENPSYLQAKDVADALIAAFNTPADDGGVDEIHVVYTKFVSMLTQTPEARRILPLEVEETTEEPVGGMFPQYEFEPNAAGVLDALLPRYVEARIYNALLQGAASELAARRRACKAATDNAEELIRTYTRLANAARQAEITQEISEIVGGADALVATGSE</sequence>
<gene>
    <name evidence="1" type="primary">atpG</name>
    <name type="ordered locus">Acel_0652</name>
</gene>
<evidence type="ECO:0000255" key="1">
    <source>
        <dbReference type="HAMAP-Rule" id="MF_00815"/>
    </source>
</evidence>
<dbReference type="EMBL" id="CP000481">
    <property type="protein sequence ID" value="ABK52425.1"/>
    <property type="molecule type" value="Genomic_DNA"/>
</dbReference>
<dbReference type="RefSeq" id="WP_011719488.1">
    <property type="nucleotide sequence ID" value="NC_008578.1"/>
</dbReference>
<dbReference type="SMR" id="A0LSL5"/>
<dbReference type="FunCoup" id="A0LSL5">
    <property type="interactions" value="340"/>
</dbReference>
<dbReference type="STRING" id="351607.Acel_0652"/>
<dbReference type="KEGG" id="ace:Acel_0652"/>
<dbReference type="eggNOG" id="COG0224">
    <property type="taxonomic scope" value="Bacteria"/>
</dbReference>
<dbReference type="HOGENOM" id="CLU_050669_0_0_11"/>
<dbReference type="InParanoid" id="A0LSL5"/>
<dbReference type="OrthoDB" id="9812769at2"/>
<dbReference type="Proteomes" id="UP000008221">
    <property type="component" value="Chromosome"/>
</dbReference>
<dbReference type="GO" id="GO:0005886">
    <property type="term" value="C:plasma membrane"/>
    <property type="evidence" value="ECO:0007669"/>
    <property type="project" value="UniProtKB-SubCell"/>
</dbReference>
<dbReference type="GO" id="GO:0045259">
    <property type="term" value="C:proton-transporting ATP synthase complex"/>
    <property type="evidence" value="ECO:0007669"/>
    <property type="project" value="UniProtKB-KW"/>
</dbReference>
<dbReference type="GO" id="GO:0005524">
    <property type="term" value="F:ATP binding"/>
    <property type="evidence" value="ECO:0007669"/>
    <property type="project" value="UniProtKB-UniRule"/>
</dbReference>
<dbReference type="GO" id="GO:0046933">
    <property type="term" value="F:proton-transporting ATP synthase activity, rotational mechanism"/>
    <property type="evidence" value="ECO:0007669"/>
    <property type="project" value="UniProtKB-UniRule"/>
</dbReference>
<dbReference type="GO" id="GO:0042777">
    <property type="term" value="P:proton motive force-driven plasma membrane ATP synthesis"/>
    <property type="evidence" value="ECO:0007669"/>
    <property type="project" value="UniProtKB-UniRule"/>
</dbReference>
<dbReference type="CDD" id="cd12151">
    <property type="entry name" value="F1-ATPase_gamma"/>
    <property type="match status" value="1"/>
</dbReference>
<dbReference type="Gene3D" id="3.40.1380.10">
    <property type="match status" value="1"/>
</dbReference>
<dbReference type="Gene3D" id="1.10.287.80">
    <property type="entry name" value="ATP synthase, gamma subunit, helix hairpin domain"/>
    <property type="match status" value="1"/>
</dbReference>
<dbReference type="HAMAP" id="MF_00815">
    <property type="entry name" value="ATP_synth_gamma_bact"/>
    <property type="match status" value="1"/>
</dbReference>
<dbReference type="InterPro" id="IPR035968">
    <property type="entry name" value="ATP_synth_F1_ATPase_gsu"/>
</dbReference>
<dbReference type="InterPro" id="IPR000131">
    <property type="entry name" value="ATP_synth_F1_gsu"/>
</dbReference>
<dbReference type="InterPro" id="IPR023632">
    <property type="entry name" value="ATP_synth_F1_gsu_CS"/>
</dbReference>
<dbReference type="NCBIfam" id="TIGR01146">
    <property type="entry name" value="ATPsyn_F1gamma"/>
    <property type="match status" value="1"/>
</dbReference>
<dbReference type="NCBIfam" id="NF004145">
    <property type="entry name" value="PRK05621.1-2"/>
    <property type="match status" value="1"/>
</dbReference>
<dbReference type="PANTHER" id="PTHR11693">
    <property type="entry name" value="ATP SYNTHASE GAMMA CHAIN"/>
    <property type="match status" value="1"/>
</dbReference>
<dbReference type="PANTHER" id="PTHR11693:SF22">
    <property type="entry name" value="ATP SYNTHASE SUBUNIT GAMMA, MITOCHONDRIAL"/>
    <property type="match status" value="1"/>
</dbReference>
<dbReference type="Pfam" id="PF00231">
    <property type="entry name" value="ATP-synt"/>
    <property type="match status" value="1"/>
</dbReference>
<dbReference type="PRINTS" id="PR00126">
    <property type="entry name" value="ATPASEGAMMA"/>
</dbReference>
<dbReference type="SUPFAM" id="SSF52943">
    <property type="entry name" value="ATP synthase (F1-ATPase), gamma subunit"/>
    <property type="match status" value="1"/>
</dbReference>
<dbReference type="PROSITE" id="PS00153">
    <property type="entry name" value="ATPASE_GAMMA"/>
    <property type="match status" value="1"/>
</dbReference>
<keyword id="KW-0066">ATP synthesis</keyword>
<keyword id="KW-1003">Cell membrane</keyword>
<keyword id="KW-0139">CF(1)</keyword>
<keyword id="KW-0375">Hydrogen ion transport</keyword>
<keyword id="KW-0406">Ion transport</keyword>
<keyword id="KW-0472">Membrane</keyword>
<keyword id="KW-1185">Reference proteome</keyword>
<keyword id="KW-0813">Transport</keyword>
<name>ATPG_ACIC1</name>
<comment type="function">
    <text evidence="1">Produces ATP from ADP in the presence of a proton gradient across the membrane. The gamma chain is believed to be important in regulating ATPase activity and the flow of protons through the CF(0) complex.</text>
</comment>
<comment type="subunit">
    <text evidence="1">F-type ATPases have 2 components, CF(1) - the catalytic core - and CF(0) - the membrane proton channel. CF(1) has five subunits: alpha(3), beta(3), gamma(1), delta(1), epsilon(1). CF(0) has three main subunits: a, b and c.</text>
</comment>
<comment type="subcellular location">
    <subcellularLocation>
        <location evidence="1">Cell membrane</location>
        <topology evidence="1">Peripheral membrane protein</topology>
    </subcellularLocation>
</comment>
<comment type="similarity">
    <text evidence="1">Belongs to the ATPase gamma chain family.</text>
</comment>
<accession>A0LSL5</accession>
<protein>
    <recommendedName>
        <fullName evidence="1">ATP synthase gamma chain</fullName>
    </recommendedName>
    <alternativeName>
        <fullName evidence="1">ATP synthase F1 sector gamma subunit</fullName>
    </alternativeName>
    <alternativeName>
        <fullName evidence="1">F-ATPase gamma subunit</fullName>
    </alternativeName>
</protein>
<feature type="chain" id="PRO_1000053143" description="ATP synthase gamma chain">
    <location>
        <begin position="1"/>
        <end position="300"/>
    </location>
</feature>
<reference key="1">
    <citation type="journal article" date="2009" name="Genome Res.">
        <title>Complete genome of the cellulolytic thermophile Acidothermus cellulolyticus 11B provides insights into its ecophysiological and evolutionary adaptations.</title>
        <authorList>
            <person name="Barabote R.D."/>
            <person name="Xie G."/>
            <person name="Leu D.H."/>
            <person name="Normand P."/>
            <person name="Necsulea A."/>
            <person name="Daubin V."/>
            <person name="Medigue C."/>
            <person name="Adney W.S."/>
            <person name="Xu X.C."/>
            <person name="Lapidus A."/>
            <person name="Parales R.E."/>
            <person name="Detter C."/>
            <person name="Pujic P."/>
            <person name="Bruce D."/>
            <person name="Lavire C."/>
            <person name="Challacombe J.F."/>
            <person name="Brettin T.S."/>
            <person name="Berry A.M."/>
        </authorList>
    </citation>
    <scope>NUCLEOTIDE SEQUENCE [LARGE SCALE GENOMIC DNA]</scope>
    <source>
        <strain>ATCC 43068 / DSM 8971 / 11B</strain>
    </source>
</reference>
<organism>
    <name type="scientific">Acidothermus cellulolyticus (strain ATCC 43068 / DSM 8971 / 11B)</name>
    <dbReference type="NCBI Taxonomy" id="351607"/>
    <lineage>
        <taxon>Bacteria</taxon>
        <taxon>Bacillati</taxon>
        <taxon>Actinomycetota</taxon>
        <taxon>Actinomycetes</taxon>
        <taxon>Acidothermales</taxon>
        <taxon>Acidothermaceae</taxon>
        <taxon>Acidothermus</taxon>
    </lineage>
</organism>